<protein>
    <recommendedName>
        <fullName evidence="1">UDP-3-O-acyl-N-acetylglucosamine deacetylase</fullName>
        <shortName evidence="1">UDP-3-O-acyl-GlcNAc deacetylase</shortName>
        <ecNumber evidence="1">3.5.1.108</ecNumber>
    </recommendedName>
    <alternativeName>
        <fullName evidence="1">UDP-3-O-[R-3-hydroxymyristoyl]-N-acetylglucosamine deacetylase</fullName>
    </alternativeName>
</protein>
<organism>
    <name type="scientific">Pseudomonas savastanoi pv. phaseolicola (strain 1448A / Race 6)</name>
    <name type="common">Pseudomonas syringae pv. phaseolicola (strain 1448A / Race 6)</name>
    <dbReference type="NCBI Taxonomy" id="264730"/>
    <lineage>
        <taxon>Bacteria</taxon>
        <taxon>Pseudomonadati</taxon>
        <taxon>Pseudomonadota</taxon>
        <taxon>Gammaproteobacteria</taxon>
        <taxon>Pseudomonadales</taxon>
        <taxon>Pseudomonadaceae</taxon>
        <taxon>Pseudomonas</taxon>
    </lineage>
</organism>
<dbReference type="EC" id="3.5.1.108" evidence="1"/>
<dbReference type="EMBL" id="CP000058">
    <property type="protein sequence ID" value="AAZ33238.1"/>
    <property type="molecule type" value="Genomic_DNA"/>
</dbReference>
<dbReference type="RefSeq" id="WP_002555040.1">
    <property type="nucleotide sequence ID" value="NC_005773.3"/>
</dbReference>
<dbReference type="SMR" id="Q48EG4"/>
<dbReference type="GeneID" id="69861153"/>
<dbReference type="KEGG" id="psp:PSPPH_4102"/>
<dbReference type="eggNOG" id="COG0774">
    <property type="taxonomic scope" value="Bacteria"/>
</dbReference>
<dbReference type="HOGENOM" id="CLU_046528_1_0_6"/>
<dbReference type="UniPathway" id="UPA00359">
    <property type="reaction ID" value="UER00478"/>
</dbReference>
<dbReference type="Proteomes" id="UP000000551">
    <property type="component" value="Chromosome"/>
</dbReference>
<dbReference type="GO" id="GO:0016020">
    <property type="term" value="C:membrane"/>
    <property type="evidence" value="ECO:0007669"/>
    <property type="project" value="GOC"/>
</dbReference>
<dbReference type="GO" id="GO:0046872">
    <property type="term" value="F:metal ion binding"/>
    <property type="evidence" value="ECO:0007669"/>
    <property type="project" value="UniProtKB-KW"/>
</dbReference>
<dbReference type="GO" id="GO:0103117">
    <property type="term" value="F:UDP-3-O-acyl-N-acetylglucosamine deacetylase activity"/>
    <property type="evidence" value="ECO:0007669"/>
    <property type="project" value="UniProtKB-UniRule"/>
</dbReference>
<dbReference type="GO" id="GO:0009245">
    <property type="term" value="P:lipid A biosynthetic process"/>
    <property type="evidence" value="ECO:0007669"/>
    <property type="project" value="UniProtKB-UniRule"/>
</dbReference>
<dbReference type="FunFam" id="3.30.230.20:FF:000001">
    <property type="entry name" value="UDP-3-O-acyl-N-acetylglucosamine deacetylase"/>
    <property type="match status" value="1"/>
</dbReference>
<dbReference type="Gene3D" id="3.30.230.20">
    <property type="entry name" value="lpxc deacetylase, domain 1"/>
    <property type="match status" value="1"/>
</dbReference>
<dbReference type="Gene3D" id="3.30.1700.10">
    <property type="entry name" value="lpxc deacetylase, domain 2"/>
    <property type="match status" value="1"/>
</dbReference>
<dbReference type="HAMAP" id="MF_00388">
    <property type="entry name" value="LpxC"/>
    <property type="match status" value="1"/>
</dbReference>
<dbReference type="InterPro" id="IPR020568">
    <property type="entry name" value="Ribosomal_Su5_D2-typ_SF"/>
</dbReference>
<dbReference type="InterPro" id="IPR004463">
    <property type="entry name" value="UDP-acyl_GlcNac_deAcase"/>
</dbReference>
<dbReference type="InterPro" id="IPR011334">
    <property type="entry name" value="UDP-acyl_GlcNac_deAcase_C"/>
</dbReference>
<dbReference type="InterPro" id="IPR015870">
    <property type="entry name" value="UDP-acyl_N-AcGlcN_deAcase_N"/>
</dbReference>
<dbReference type="NCBIfam" id="TIGR00325">
    <property type="entry name" value="lpxC"/>
    <property type="match status" value="1"/>
</dbReference>
<dbReference type="PANTHER" id="PTHR33694">
    <property type="entry name" value="UDP-3-O-ACYL-N-ACETYLGLUCOSAMINE DEACETYLASE 1, MITOCHONDRIAL-RELATED"/>
    <property type="match status" value="1"/>
</dbReference>
<dbReference type="PANTHER" id="PTHR33694:SF1">
    <property type="entry name" value="UDP-3-O-ACYL-N-ACETYLGLUCOSAMINE DEACETYLASE 1, MITOCHONDRIAL-RELATED"/>
    <property type="match status" value="1"/>
</dbReference>
<dbReference type="Pfam" id="PF03331">
    <property type="entry name" value="LpxC"/>
    <property type="match status" value="1"/>
</dbReference>
<dbReference type="SUPFAM" id="SSF54211">
    <property type="entry name" value="Ribosomal protein S5 domain 2-like"/>
    <property type="match status" value="2"/>
</dbReference>
<accession>Q48EG4</accession>
<reference key="1">
    <citation type="journal article" date="2005" name="J. Bacteriol.">
        <title>Whole-genome sequence analysis of Pseudomonas syringae pv. phaseolicola 1448A reveals divergence among pathovars in genes involved in virulence and transposition.</title>
        <authorList>
            <person name="Joardar V."/>
            <person name="Lindeberg M."/>
            <person name="Jackson R.W."/>
            <person name="Selengut J."/>
            <person name="Dodson R."/>
            <person name="Brinkac L.M."/>
            <person name="Daugherty S.C."/>
            <person name="DeBoy R.T."/>
            <person name="Durkin A.S."/>
            <person name="Gwinn Giglio M."/>
            <person name="Madupu R."/>
            <person name="Nelson W.C."/>
            <person name="Rosovitz M.J."/>
            <person name="Sullivan S.A."/>
            <person name="Crabtree J."/>
            <person name="Creasy T."/>
            <person name="Davidsen T.M."/>
            <person name="Haft D.H."/>
            <person name="Zafar N."/>
            <person name="Zhou L."/>
            <person name="Halpin R."/>
            <person name="Holley T."/>
            <person name="Khouri H.M."/>
            <person name="Feldblyum T.V."/>
            <person name="White O."/>
            <person name="Fraser C.M."/>
            <person name="Chatterjee A.K."/>
            <person name="Cartinhour S."/>
            <person name="Schneider D."/>
            <person name="Mansfield J.W."/>
            <person name="Collmer A."/>
            <person name="Buell R."/>
        </authorList>
    </citation>
    <scope>NUCLEOTIDE SEQUENCE [LARGE SCALE GENOMIC DNA]</scope>
    <source>
        <strain>1448A / Race 6</strain>
    </source>
</reference>
<evidence type="ECO:0000255" key="1">
    <source>
        <dbReference type="HAMAP-Rule" id="MF_00388"/>
    </source>
</evidence>
<sequence>MIKQRTLKNIIRATGVGLHSGEKVYLTLKPAPVNTGIVFCRADLDPVVQIPARAENVGDTTLSTTLVNGDVKVDTVEHLLSAMAGLGIDNAYVELSASEVPIMDGSAGPFVFLIQSAGLEEQDAPKKFIRILREVTVEEGGKRATFVPFEGFKVSFEIDFDHPVFRDRTQSASVDFSSTSFVKEVSRARTFGFMSDIEYLRKHNLALGGSVENAIVVDKDGVLNEDGLRYEDEFVKHKILDAIGDLYLLGNSLIGEFRGFKSGHALNNRLLRTLIEQKDAWEVVTFEDASTAPISYMRPVAAV</sequence>
<feature type="chain" id="PRO_0000253685" description="UDP-3-O-acyl-N-acetylglucosamine deacetylase">
    <location>
        <begin position="1"/>
        <end position="303"/>
    </location>
</feature>
<feature type="active site" description="Proton donor" evidence="1">
    <location>
        <position position="264"/>
    </location>
</feature>
<feature type="binding site" evidence="1">
    <location>
        <position position="78"/>
    </location>
    <ligand>
        <name>Zn(2+)</name>
        <dbReference type="ChEBI" id="CHEBI:29105"/>
    </ligand>
</feature>
<feature type="binding site" evidence="1">
    <location>
        <position position="237"/>
    </location>
    <ligand>
        <name>Zn(2+)</name>
        <dbReference type="ChEBI" id="CHEBI:29105"/>
    </ligand>
</feature>
<feature type="binding site" evidence="1">
    <location>
        <position position="241"/>
    </location>
    <ligand>
        <name>Zn(2+)</name>
        <dbReference type="ChEBI" id="CHEBI:29105"/>
    </ligand>
</feature>
<name>LPXC_PSE14</name>
<keyword id="KW-0378">Hydrolase</keyword>
<keyword id="KW-0441">Lipid A biosynthesis</keyword>
<keyword id="KW-0444">Lipid biosynthesis</keyword>
<keyword id="KW-0443">Lipid metabolism</keyword>
<keyword id="KW-0479">Metal-binding</keyword>
<keyword id="KW-0862">Zinc</keyword>
<comment type="function">
    <text evidence="1">Catalyzes the hydrolysis of UDP-3-O-myristoyl-N-acetylglucosamine to form UDP-3-O-myristoylglucosamine and acetate, the committed step in lipid A biosynthesis.</text>
</comment>
<comment type="catalytic activity">
    <reaction evidence="1">
        <text>a UDP-3-O-[(3R)-3-hydroxyacyl]-N-acetyl-alpha-D-glucosamine + H2O = a UDP-3-O-[(3R)-3-hydroxyacyl]-alpha-D-glucosamine + acetate</text>
        <dbReference type="Rhea" id="RHEA:67816"/>
        <dbReference type="ChEBI" id="CHEBI:15377"/>
        <dbReference type="ChEBI" id="CHEBI:30089"/>
        <dbReference type="ChEBI" id="CHEBI:137740"/>
        <dbReference type="ChEBI" id="CHEBI:173225"/>
        <dbReference type="EC" id="3.5.1.108"/>
    </reaction>
</comment>
<comment type="cofactor">
    <cofactor evidence="1">
        <name>Zn(2+)</name>
        <dbReference type="ChEBI" id="CHEBI:29105"/>
    </cofactor>
</comment>
<comment type="pathway">
    <text evidence="1">Glycolipid biosynthesis; lipid IV(A) biosynthesis; lipid IV(A) from (3R)-3-hydroxytetradecanoyl-[acyl-carrier-protein] and UDP-N-acetyl-alpha-D-glucosamine: step 2/6.</text>
</comment>
<comment type="similarity">
    <text evidence="1">Belongs to the LpxC family.</text>
</comment>
<gene>
    <name evidence="1" type="primary">lpxC</name>
    <name type="ordered locus">PSPPH_4102</name>
</gene>
<proteinExistence type="inferred from homology"/>